<protein>
    <recommendedName>
        <fullName evidence="1">Bifunctional uridylyltransferase/uridylyl-removing enzyme</fullName>
        <shortName evidence="1">UTase/UR</shortName>
    </recommendedName>
    <alternativeName>
        <fullName evidence="1">Bifunctional [protein-PII] modification enzyme</fullName>
    </alternativeName>
    <alternativeName>
        <fullName evidence="1">Bifunctional nitrogen sensor protein</fullName>
    </alternativeName>
    <domain>
        <recommendedName>
            <fullName evidence="1">[Protein-PII] uridylyltransferase</fullName>
            <shortName evidence="1">PII uridylyltransferase</shortName>
            <shortName evidence="1">UTase</shortName>
            <ecNumber evidence="1">2.7.7.59</ecNumber>
        </recommendedName>
    </domain>
    <domain>
        <recommendedName>
            <fullName evidence="1">[Protein-PII]-UMP uridylyl-removing enzyme</fullName>
            <shortName evidence="1">UR</shortName>
            <ecNumber evidence="1">3.1.4.-</ecNumber>
        </recommendedName>
    </domain>
</protein>
<proteinExistence type="inferred from homology"/>
<name>GLND_PSEF5</name>
<reference key="1">
    <citation type="journal article" date="2005" name="Nat. Biotechnol.">
        <title>Complete genome sequence of the plant commensal Pseudomonas fluorescens Pf-5.</title>
        <authorList>
            <person name="Paulsen I.T."/>
            <person name="Press C.M."/>
            <person name="Ravel J."/>
            <person name="Kobayashi D.Y."/>
            <person name="Myers G.S.A."/>
            <person name="Mavrodi D.V."/>
            <person name="DeBoy R.T."/>
            <person name="Seshadri R."/>
            <person name="Ren Q."/>
            <person name="Madupu R."/>
            <person name="Dodson R.J."/>
            <person name="Durkin A.S."/>
            <person name="Brinkac L.M."/>
            <person name="Daugherty S.C."/>
            <person name="Sullivan S.A."/>
            <person name="Rosovitz M.J."/>
            <person name="Gwinn M.L."/>
            <person name="Zhou L."/>
            <person name="Schneider D.J."/>
            <person name="Cartinhour S.W."/>
            <person name="Nelson W.C."/>
            <person name="Weidman J."/>
            <person name="Watkins K."/>
            <person name="Tran K."/>
            <person name="Khouri H."/>
            <person name="Pierson E.A."/>
            <person name="Pierson L.S. III"/>
            <person name="Thomashow L.S."/>
            <person name="Loper J.E."/>
        </authorList>
    </citation>
    <scope>NUCLEOTIDE SEQUENCE [LARGE SCALE GENOMIC DNA]</scope>
    <source>
        <strain>ATCC BAA-477 / NRRL B-23932 / Pf-5</strain>
    </source>
</reference>
<comment type="function">
    <text evidence="1">Modifies, by uridylylation and deuridylylation, the PII regulatory proteins (GlnB and homologs), in response to the nitrogen status of the cell that GlnD senses through the glutamine level. Under low glutamine levels, catalyzes the conversion of the PII proteins and UTP to PII-UMP and PPi, while under higher glutamine levels, GlnD hydrolyzes PII-UMP to PII and UMP (deuridylylation). Thus, controls uridylylation state and activity of the PII proteins, and plays an important role in the regulation of nitrogen assimilation and metabolism.</text>
</comment>
<comment type="catalytic activity">
    <reaction evidence="1">
        <text>[protein-PII]-L-tyrosine + UTP = [protein-PII]-uridylyl-L-tyrosine + diphosphate</text>
        <dbReference type="Rhea" id="RHEA:13673"/>
        <dbReference type="Rhea" id="RHEA-COMP:12147"/>
        <dbReference type="Rhea" id="RHEA-COMP:12148"/>
        <dbReference type="ChEBI" id="CHEBI:33019"/>
        <dbReference type="ChEBI" id="CHEBI:46398"/>
        <dbReference type="ChEBI" id="CHEBI:46858"/>
        <dbReference type="ChEBI" id="CHEBI:90602"/>
        <dbReference type="EC" id="2.7.7.59"/>
    </reaction>
</comment>
<comment type="catalytic activity">
    <reaction evidence="1">
        <text>[protein-PII]-uridylyl-L-tyrosine + H2O = [protein-PII]-L-tyrosine + UMP + H(+)</text>
        <dbReference type="Rhea" id="RHEA:48600"/>
        <dbReference type="Rhea" id="RHEA-COMP:12147"/>
        <dbReference type="Rhea" id="RHEA-COMP:12148"/>
        <dbReference type="ChEBI" id="CHEBI:15377"/>
        <dbReference type="ChEBI" id="CHEBI:15378"/>
        <dbReference type="ChEBI" id="CHEBI:46858"/>
        <dbReference type="ChEBI" id="CHEBI:57865"/>
        <dbReference type="ChEBI" id="CHEBI:90602"/>
    </reaction>
</comment>
<comment type="cofactor">
    <cofactor evidence="1">
        <name>Mg(2+)</name>
        <dbReference type="ChEBI" id="CHEBI:18420"/>
    </cofactor>
</comment>
<comment type="activity regulation">
    <text evidence="1">Uridylyltransferase (UTase) activity is inhibited by glutamine, while glutamine activates uridylyl-removing (UR) activity.</text>
</comment>
<comment type="domain">
    <text evidence="1">Has four distinct domains: an N-terminal nucleotidyltransferase (NT) domain responsible for UTase activity, a central HD domain that encodes UR activity, and two C-terminal ACT domains that seem to have a role in glutamine sensing.</text>
</comment>
<comment type="similarity">
    <text evidence="1">Belongs to the GlnD family.</text>
</comment>
<gene>
    <name evidence="1" type="primary">glnD</name>
    <name type="ordered locus">PFL_1174</name>
</gene>
<feature type="chain" id="PRO_0000192753" description="Bifunctional uridylyltransferase/uridylyl-removing enzyme">
    <location>
        <begin position="1"/>
        <end position="900"/>
    </location>
</feature>
<feature type="domain" description="HD" evidence="2">
    <location>
        <begin position="461"/>
        <end position="583"/>
    </location>
</feature>
<feature type="domain" description="ACT 1" evidence="1">
    <location>
        <begin position="706"/>
        <end position="789"/>
    </location>
</feature>
<feature type="domain" description="ACT 2" evidence="1">
    <location>
        <begin position="816"/>
        <end position="895"/>
    </location>
</feature>
<feature type="region of interest" description="Uridylyltransferase">
    <location>
        <begin position="1"/>
        <end position="342"/>
    </location>
</feature>
<feature type="region of interest" description="Uridylyl-removing">
    <location>
        <begin position="343"/>
        <end position="705"/>
    </location>
</feature>
<organism>
    <name type="scientific">Pseudomonas fluorescens (strain ATCC BAA-477 / NRRL B-23932 / Pf-5)</name>
    <dbReference type="NCBI Taxonomy" id="220664"/>
    <lineage>
        <taxon>Bacteria</taxon>
        <taxon>Pseudomonadati</taxon>
        <taxon>Pseudomonadota</taxon>
        <taxon>Gammaproteobacteria</taxon>
        <taxon>Pseudomonadales</taxon>
        <taxon>Pseudomonadaceae</taxon>
        <taxon>Pseudomonas</taxon>
    </lineage>
</organism>
<keyword id="KW-0378">Hydrolase</keyword>
<keyword id="KW-0460">Magnesium</keyword>
<keyword id="KW-0511">Multifunctional enzyme</keyword>
<keyword id="KW-0548">Nucleotidyltransferase</keyword>
<keyword id="KW-0677">Repeat</keyword>
<keyword id="KW-0808">Transferase</keyword>
<evidence type="ECO:0000255" key="1">
    <source>
        <dbReference type="HAMAP-Rule" id="MF_00277"/>
    </source>
</evidence>
<evidence type="ECO:0000255" key="2">
    <source>
        <dbReference type="PROSITE-ProRule" id="PRU01175"/>
    </source>
</evidence>
<sequence length="900" mass="103314">MPQVDPELFDRGQFQAELALKASPIAAFKKAIRQAREVLDTRFRSGREIRRLIEDRAWFIDNILQKAWDQFSWSEDADIALVAVGGYGRGELHPYSDIDLLILLDSADHEIFRDSIERFLTLLWDIGLEVGQSVRSVDECAEQARADLTVITNLMESRTIAGPEHLRQRMLQVTSTEHMWPSKDFFLAKRAEQKARHHKYNDTEYNLEPNVKGSPGGLRDIQTILWVARRQYGTLNLRALAGEGFLVESENALLASSQEFLWKVRYALHMLAGRAEDRLLLDHQRSIATLLGFEGEDAKQSIESFMQQYYRVVMSIAQLSDLIIQHFEEVILAPEDEAPPQPINARFQLHDGYIEAINDNVFKRTPFAMLEIFVLMAQHPEIKGVRADTIRLLREHRHLIDDDFRHDIRNTSLFIELFKCEIGIHRNLRRMNRYGILGRYLPEFGFIVGQMQHDLFHIYTVDAHTLNLIKHLRKMQYTPISEKFPLASKLMGKLPKPELIYLAGLYHDIGKGRHGDHSEIGAVDAEAFCVRHQLPQWDTRLIVWLVQNHLVMSTTAQRKDLSDPQVIHDFAQIVVDQTRLDYLYVLTVADIYATNPTLWNSWRASLLRQLYTETKRALRRGLENPVDREEQIRQTQSAALDILVRNGTDPDEVEQLWSQLGDDYFLRHTAGDVAWHSDAILQQPADGGPLVLIKEITQREFEGGTQIFIYAPDQHDFFAVTVAAMDQLNLNIHDARIITSSSQFTLDTYIVLDNDGESIGNNPQRVEQIRKGLTDALRNPDDYPTIIQRRVPRQLKHFAFAPEVTIHNDAQRPVTVLELSAPDRPGLLARIGKIFLEFDLSLQNAKIATLGERVEDVFFITDAHNQPLSDPQLCSRLQDAIVEQLSVSHEPTIEMTRLSI</sequence>
<dbReference type="EC" id="2.7.7.59" evidence="1"/>
<dbReference type="EC" id="3.1.4.-" evidence="1"/>
<dbReference type="EMBL" id="CP000076">
    <property type="protein sequence ID" value="AAY90461.1"/>
    <property type="molecule type" value="Genomic_DNA"/>
</dbReference>
<dbReference type="RefSeq" id="WP_011059522.1">
    <property type="nucleotide sequence ID" value="NC_004129.6"/>
</dbReference>
<dbReference type="SMR" id="Q4KHH8"/>
<dbReference type="STRING" id="220664.PFL_1174"/>
<dbReference type="KEGG" id="pfl:PFL_1174"/>
<dbReference type="PATRIC" id="fig|220664.5.peg.1206"/>
<dbReference type="eggNOG" id="COG2844">
    <property type="taxonomic scope" value="Bacteria"/>
</dbReference>
<dbReference type="HOGENOM" id="CLU_012833_0_0_6"/>
<dbReference type="Proteomes" id="UP000008540">
    <property type="component" value="Chromosome"/>
</dbReference>
<dbReference type="GO" id="GO:0008773">
    <property type="term" value="F:[protein-PII] uridylyltransferase activity"/>
    <property type="evidence" value="ECO:0007669"/>
    <property type="project" value="UniProtKB-UniRule"/>
</dbReference>
<dbReference type="GO" id="GO:0008081">
    <property type="term" value="F:phosphoric diester hydrolase activity"/>
    <property type="evidence" value="ECO:0007669"/>
    <property type="project" value="UniProtKB-UniRule"/>
</dbReference>
<dbReference type="GO" id="GO:0006808">
    <property type="term" value="P:regulation of nitrogen utilization"/>
    <property type="evidence" value="ECO:0007669"/>
    <property type="project" value="UniProtKB-UniRule"/>
</dbReference>
<dbReference type="CDD" id="cd04899">
    <property type="entry name" value="ACT_ACR-UUR-like_2"/>
    <property type="match status" value="1"/>
</dbReference>
<dbReference type="CDD" id="cd04900">
    <property type="entry name" value="ACT_UUR-like_1"/>
    <property type="match status" value="1"/>
</dbReference>
<dbReference type="CDD" id="cd00077">
    <property type="entry name" value="HDc"/>
    <property type="match status" value="1"/>
</dbReference>
<dbReference type="CDD" id="cd05401">
    <property type="entry name" value="NT_GlnE_GlnD_like"/>
    <property type="match status" value="1"/>
</dbReference>
<dbReference type="FunFam" id="1.10.3090.10:FF:000005">
    <property type="entry name" value="Bifunctional uridylyltransferase/uridylyl-removing enzyme"/>
    <property type="match status" value="1"/>
</dbReference>
<dbReference type="Gene3D" id="3.30.460.10">
    <property type="entry name" value="Beta Polymerase, domain 2"/>
    <property type="match status" value="1"/>
</dbReference>
<dbReference type="Gene3D" id="1.10.3090.10">
    <property type="entry name" value="cca-adding enzyme, domain 2"/>
    <property type="match status" value="1"/>
</dbReference>
<dbReference type="Gene3D" id="1.20.120.330">
    <property type="entry name" value="Nucleotidyltransferases domain 2"/>
    <property type="match status" value="1"/>
</dbReference>
<dbReference type="HAMAP" id="MF_00277">
    <property type="entry name" value="PII_uridylyl_transf"/>
    <property type="match status" value="1"/>
</dbReference>
<dbReference type="InterPro" id="IPR045865">
    <property type="entry name" value="ACT-like_dom_sf"/>
</dbReference>
<dbReference type="InterPro" id="IPR002912">
    <property type="entry name" value="ACT_dom"/>
</dbReference>
<dbReference type="InterPro" id="IPR003607">
    <property type="entry name" value="HD/PDEase_dom"/>
</dbReference>
<dbReference type="InterPro" id="IPR006674">
    <property type="entry name" value="HD_domain"/>
</dbReference>
<dbReference type="InterPro" id="IPR043519">
    <property type="entry name" value="NT_sf"/>
</dbReference>
<dbReference type="InterPro" id="IPR013546">
    <property type="entry name" value="PII_UdlTrfase/GS_AdlTrfase"/>
</dbReference>
<dbReference type="InterPro" id="IPR002934">
    <property type="entry name" value="Polymerase_NTP_transf_dom"/>
</dbReference>
<dbReference type="InterPro" id="IPR010043">
    <property type="entry name" value="UTase/UR"/>
</dbReference>
<dbReference type="NCBIfam" id="NF001366">
    <property type="entry name" value="PRK00275.1"/>
    <property type="match status" value="1"/>
</dbReference>
<dbReference type="NCBIfam" id="TIGR01693">
    <property type="entry name" value="UTase_glnD"/>
    <property type="match status" value="1"/>
</dbReference>
<dbReference type="PANTHER" id="PTHR47320">
    <property type="entry name" value="BIFUNCTIONAL URIDYLYLTRANSFERASE/URIDYLYL-REMOVING ENZYME"/>
    <property type="match status" value="1"/>
</dbReference>
<dbReference type="PANTHER" id="PTHR47320:SF1">
    <property type="entry name" value="BIFUNCTIONAL URIDYLYLTRANSFERASE_URIDYLYL-REMOVING ENZYME"/>
    <property type="match status" value="1"/>
</dbReference>
<dbReference type="Pfam" id="PF01842">
    <property type="entry name" value="ACT"/>
    <property type="match status" value="1"/>
</dbReference>
<dbReference type="Pfam" id="PF08335">
    <property type="entry name" value="GlnD_UR_UTase"/>
    <property type="match status" value="1"/>
</dbReference>
<dbReference type="Pfam" id="PF01966">
    <property type="entry name" value="HD"/>
    <property type="match status" value="1"/>
</dbReference>
<dbReference type="Pfam" id="PF01909">
    <property type="entry name" value="NTP_transf_2"/>
    <property type="match status" value="1"/>
</dbReference>
<dbReference type="PIRSF" id="PIRSF006288">
    <property type="entry name" value="PII_uridyltransf"/>
    <property type="match status" value="1"/>
</dbReference>
<dbReference type="SMART" id="SM00471">
    <property type="entry name" value="HDc"/>
    <property type="match status" value="1"/>
</dbReference>
<dbReference type="SUPFAM" id="SSF55021">
    <property type="entry name" value="ACT-like"/>
    <property type="match status" value="2"/>
</dbReference>
<dbReference type="SUPFAM" id="SSF109604">
    <property type="entry name" value="HD-domain/PDEase-like"/>
    <property type="match status" value="1"/>
</dbReference>
<dbReference type="SUPFAM" id="SSF81301">
    <property type="entry name" value="Nucleotidyltransferase"/>
    <property type="match status" value="1"/>
</dbReference>
<dbReference type="SUPFAM" id="SSF81593">
    <property type="entry name" value="Nucleotidyltransferase substrate binding subunit/domain"/>
    <property type="match status" value="1"/>
</dbReference>
<dbReference type="PROSITE" id="PS51671">
    <property type="entry name" value="ACT"/>
    <property type="match status" value="2"/>
</dbReference>
<dbReference type="PROSITE" id="PS51831">
    <property type="entry name" value="HD"/>
    <property type="match status" value="1"/>
</dbReference>
<accession>Q4KHH8</accession>